<organism>
    <name type="scientific">Ralstonia nicotianae (strain ATCC BAA-1114 / GMI1000)</name>
    <name type="common">Ralstonia solanacearum</name>
    <dbReference type="NCBI Taxonomy" id="267608"/>
    <lineage>
        <taxon>Bacteria</taxon>
        <taxon>Pseudomonadati</taxon>
        <taxon>Pseudomonadota</taxon>
        <taxon>Betaproteobacteria</taxon>
        <taxon>Burkholderiales</taxon>
        <taxon>Burkholderiaceae</taxon>
        <taxon>Ralstonia</taxon>
        <taxon>Ralstonia solanacearum species complex</taxon>
    </lineage>
</organism>
<gene>
    <name evidence="1" type="primary">aspS</name>
    <name type="ordered locus">RSc0466</name>
    <name type="ORF">RS04431</name>
</gene>
<comment type="function">
    <text evidence="1">Aspartyl-tRNA synthetase with relaxed tRNA specificity since it is able to aspartylate not only its cognate tRNA(Asp) but also tRNA(Asn). Reaction proceeds in two steps: L-aspartate is first activated by ATP to form Asp-AMP and then transferred to the acceptor end of tRNA(Asp/Asn).</text>
</comment>
<comment type="catalytic activity">
    <reaction evidence="1">
        <text>tRNA(Asx) + L-aspartate + ATP = L-aspartyl-tRNA(Asx) + AMP + diphosphate</text>
        <dbReference type="Rhea" id="RHEA:18349"/>
        <dbReference type="Rhea" id="RHEA-COMP:9710"/>
        <dbReference type="Rhea" id="RHEA-COMP:9711"/>
        <dbReference type="ChEBI" id="CHEBI:29991"/>
        <dbReference type="ChEBI" id="CHEBI:30616"/>
        <dbReference type="ChEBI" id="CHEBI:33019"/>
        <dbReference type="ChEBI" id="CHEBI:78442"/>
        <dbReference type="ChEBI" id="CHEBI:78516"/>
        <dbReference type="ChEBI" id="CHEBI:456215"/>
        <dbReference type="EC" id="6.1.1.23"/>
    </reaction>
</comment>
<comment type="subunit">
    <text evidence="1">Homodimer.</text>
</comment>
<comment type="subcellular location">
    <subcellularLocation>
        <location evidence="1">Cytoplasm</location>
    </subcellularLocation>
</comment>
<comment type="similarity">
    <text evidence="1">Belongs to the class-II aminoacyl-tRNA synthetase family. Type 1 subfamily.</text>
</comment>
<proteinExistence type="inferred from homology"/>
<evidence type="ECO:0000255" key="1">
    <source>
        <dbReference type="HAMAP-Rule" id="MF_00044"/>
    </source>
</evidence>
<reference key="1">
    <citation type="journal article" date="2002" name="Nature">
        <title>Genome sequence of the plant pathogen Ralstonia solanacearum.</title>
        <authorList>
            <person name="Salanoubat M."/>
            <person name="Genin S."/>
            <person name="Artiguenave F."/>
            <person name="Gouzy J."/>
            <person name="Mangenot S."/>
            <person name="Arlat M."/>
            <person name="Billault A."/>
            <person name="Brottier P."/>
            <person name="Camus J.-C."/>
            <person name="Cattolico L."/>
            <person name="Chandler M."/>
            <person name="Choisne N."/>
            <person name="Claudel-Renard C."/>
            <person name="Cunnac S."/>
            <person name="Demange N."/>
            <person name="Gaspin C."/>
            <person name="Lavie M."/>
            <person name="Moisan A."/>
            <person name="Robert C."/>
            <person name="Saurin W."/>
            <person name="Schiex T."/>
            <person name="Siguier P."/>
            <person name="Thebault P."/>
            <person name="Whalen M."/>
            <person name="Wincker P."/>
            <person name="Levy M."/>
            <person name="Weissenbach J."/>
            <person name="Boucher C.A."/>
        </authorList>
    </citation>
    <scope>NUCLEOTIDE SEQUENCE [LARGE SCALE GENOMIC DNA]</scope>
    <source>
        <strain>ATCC BAA-1114 / GMI1000</strain>
    </source>
</reference>
<feature type="chain" id="PRO_0000110927" description="Aspartate--tRNA(Asp/Asn) ligase">
    <location>
        <begin position="1"/>
        <end position="605"/>
    </location>
</feature>
<feature type="region of interest" description="Aspartate" evidence="1">
    <location>
        <begin position="196"/>
        <end position="199"/>
    </location>
</feature>
<feature type="binding site" evidence="1">
    <location>
        <position position="172"/>
    </location>
    <ligand>
        <name>L-aspartate</name>
        <dbReference type="ChEBI" id="CHEBI:29991"/>
    </ligand>
</feature>
<feature type="binding site" evidence="1">
    <location>
        <begin position="218"/>
        <end position="220"/>
    </location>
    <ligand>
        <name>ATP</name>
        <dbReference type="ChEBI" id="CHEBI:30616"/>
    </ligand>
</feature>
<feature type="binding site" evidence="1">
    <location>
        <position position="218"/>
    </location>
    <ligand>
        <name>L-aspartate</name>
        <dbReference type="ChEBI" id="CHEBI:29991"/>
    </ligand>
</feature>
<feature type="binding site" evidence="1">
    <location>
        <position position="227"/>
    </location>
    <ligand>
        <name>ATP</name>
        <dbReference type="ChEBI" id="CHEBI:30616"/>
    </ligand>
</feature>
<feature type="binding site" evidence="1">
    <location>
        <position position="455"/>
    </location>
    <ligand>
        <name>L-aspartate</name>
        <dbReference type="ChEBI" id="CHEBI:29991"/>
    </ligand>
</feature>
<feature type="binding site" evidence="1">
    <location>
        <position position="489"/>
    </location>
    <ligand>
        <name>ATP</name>
        <dbReference type="ChEBI" id="CHEBI:30616"/>
    </ligand>
</feature>
<feature type="binding site" evidence="1">
    <location>
        <position position="496"/>
    </location>
    <ligand>
        <name>L-aspartate</name>
        <dbReference type="ChEBI" id="CHEBI:29991"/>
    </ligand>
</feature>
<feature type="binding site" evidence="1">
    <location>
        <begin position="541"/>
        <end position="544"/>
    </location>
    <ligand>
        <name>ATP</name>
        <dbReference type="ChEBI" id="CHEBI:30616"/>
    </ligand>
</feature>
<feature type="site" description="Important for tRNA non-discrimination" evidence="1">
    <location>
        <position position="30"/>
    </location>
</feature>
<feature type="site" description="Important for tRNA non-discrimination" evidence="1">
    <location>
        <position position="81"/>
    </location>
</feature>
<protein>
    <recommendedName>
        <fullName evidence="1">Aspartate--tRNA(Asp/Asn) ligase</fullName>
        <ecNumber evidence="1">6.1.1.23</ecNumber>
    </recommendedName>
    <alternativeName>
        <fullName evidence="1">Aspartyl-tRNA synthetase</fullName>
        <shortName evidence="1">AspRS</shortName>
    </alternativeName>
    <alternativeName>
        <fullName evidence="1">Non-discriminating aspartyl-tRNA synthetase</fullName>
        <shortName evidence="1">ND-AspRS</shortName>
    </alternativeName>
</protein>
<sequence>MRTQYCGQVTEQLLGQSVTLSGWAHRRRDHGGVIFIDLRDREGLVQVVCDPDRPEMFKVAEGVRNEFCLQVKGIVRARPEGTTNPNLASGKIEVLCHELTVLNASVTPPFQLDDDNLSETTRLTHRVLDLRRPQMQYNLRLRYKVAMEVRKYLDDKGFIDIETPMLTKSTPEGARDYLVPSRVNAGQFFALPQSPQLFKQMLMVSGFDRYYQITKCFRDEDLRADRQPEFTQIDCETSFLSEQEIRDLFEEMIRTVFQNTMSVALDAKFPVMEFREAMARFGSDKPDLRVKLEFTELTDAMKDVDFKVFSGPANAEGGRVVALRVPGGAALSRGDIDAYTKFVEIYGAKGLAWIKVNEVAKGRDGLQSPIVKNLHDAAIAEILKRSGAQDGDILFFGADRAKVVNDAMGALRLKVGHSDFAKSTGLFEDAWKPLWVVDFPMFEYDEEDARWVAMHHPFTSPKDEHLEYLETDPGKCIAKAYDMVLNGWEIGGGSVRIYREEVQSKVFRALKIGDEEARAKFGFLLDALQYGAPPHGGIAFGLDRVVTMMAGADSIRDVIAFPKTQRAQDLLTQAPSPVDEKQLRELHIRLRAAEAKVAAPAAATA</sequence>
<dbReference type="EC" id="6.1.1.23" evidence="1"/>
<dbReference type="EMBL" id="AL646052">
    <property type="protein sequence ID" value="CAD13994.1"/>
    <property type="molecule type" value="Genomic_DNA"/>
</dbReference>
<dbReference type="SMR" id="Q8Y270"/>
<dbReference type="STRING" id="267608.RSc0466"/>
<dbReference type="EnsemblBacteria" id="CAD13994">
    <property type="protein sequence ID" value="CAD13994"/>
    <property type="gene ID" value="RSc0466"/>
</dbReference>
<dbReference type="KEGG" id="rso:RSc0466"/>
<dbReference type="eggNOG" id="COG0173">
    <property type="taxonomic scope" value="Bacteria"/>
</dbReference>
<dbReference type="HOGENOM" id="CLU_014330_3_2_4"/>
<dbReference type="Proteomes" id="UP000001436">
    <property type="component" value="Chromosome"/>
</dbReference>
<dbReference type="GO" id="GO:0005737">
    <property type="term" value="C:cytoplasm"/>
    <property type="evidence" value="ECO:0007669"/>
    <property type="project" value="UniProtKB-SubCell"/>
</dbReference>
<dbReference type="GO" id="GO:0004815">
    <property type="term" value="F:aspartate-tRNA ligase activity"/>
    <property type="evidence" value="ECO:0007669"/>
    <property type="project" value="UniProtKB-UniRule"/>
</dbReference>
<dbReference type="GO" id="GO:0050560">
    <property type="term" value="F:aspartate-tRNA(Asn) ligase activity"/>
    <property type="evidence" value="ECO:0007669"/>
    <property type="project" value="UniProtKB-EC"/>
</dbReference>
<dbReference type="GO" id="GO:0005524">
    <property type="term" value="F:ATP binding"/>
    <property type="evidence" value="ECO:0007669"/>
    <property type="project" value="UniProtKB-UniRule"/>
</dbReference>
<dbReference type="GO" id="GO:0003676">
    <property type="term" value="F:nucleic acid binding"/>
    <property type="evidence" value="ECO:0007669"/>
    <property type="project" value="InterPro"/>
</dbReference>
<dbReference type="GO" id="GO:0006422">
    <property type="term" value="P:aspartyl-tRNA aminoacylation"/>
    <property type="evidence" value="ECO:0007669"/>
    <property type="project" value="UniProtKB-UniRule"/>
</dbReference>
<dbReference type="CDD" id="cd00777">
    <property type="entry name" value="AspRS_core"/>
    <property type="match status" value="1"/>
</dbReference>
<dbReference type="CDD" id="cd04317">
    <property type="entry name" value="EcAspRS_like_N"/>
    <property type="match status" value="1"/>
</dbReference>
<dbReference type="Gene3D" id="3.30.930.10">
    <property type="entry name" value="Bira Bifunctional Protein, Domain 2"/>
    <property type="match status" value="1"/>
</dbReference>
<dbReference type="Gene3D" id="3.30.1360.30">
    <property type="entry name" value="GAD-like domain"/>
    <property type="match status" value="1"/>
</dbReference>
<dbReference type="Gene3D" id="2.40.50.140">
    <property type="entry name" value="Nucleic acid-binding proteins"/>
    <property type="match status" value="1"/>
</dbReference>
<dbReference type="HAMAP" id="MF_00044">
    <property type="entry name" value="Asp_tRNA_synth_type1"/>
    <property type="match status" value="1"/>
</dbReference>
<dbReference type="InterPro" id="IPR004364">
    <property type="entry name" value="Aa-tRNA-synt_II"/>
</dbReference>
<dbReference type="InterPro" id="IPR006195">
    <property type="entry name" value="aa-tRNA-synth_II"/>
</dbReference>
<dbReference type="InterPro" id="IPR045864">
    <property type="entry name" value="aa-tRNA-synth_II/BPL/LPL"/>
</dbReference>
<dbReference type="InterPro" id="IPR004524">
    <property type="entry name" value="Asp-tRNA-ligase_1"/>
</dbReference>
<dbReference type="InterPro" id="IPR047089">
    <property type="entry name" value="Asp-tRNA-ligase_1_N"/>
</dbReference>
<dbReference type="InterPro" id="IPR002312">
    <property type="entry name" value="Asp/Asn-tRNA-synth_IIb"/>
</dbReference>
<dbReference type="InterPro" id="IPR047090">
    <property type="entry name" value="AspRS_core"/>
</dbReference>
<dbReference type="InterPro" id="IPR004115">
    <property type="entry name" value="GAD-like_sf"/>
</dbReference>
<dbReference type="InterPro" id="IPR029351">
    <property type="entry name" value="GAD_dom"/>
</dbReference>
<dbReference type="InterPro" id="IPR012340">
    <property type="entry name" value="NA-bd_OB-fold"/>
</dbReference>
<dbReference type="InterPro" id="IPR004365">
    <property type="entry name" value="NA-bd_OB_tRNA"/>
</dbReference>
<dbReference type="NCBIfam" id="TIGR00459">
    <property type="entry name" value="aspS_bact"/>
    <property type="match status" value="1"/>
</dbReference>
<dbReference type="NCBIfam" id="NF001750">
    <property type="entry name" value="PRK00476.1"/>
    <property type="match status" value="1"/>
</dbReference>
<dbReference type="PANTHER" id="PTHR22594:SF5">
    <property type="entry name" value="ASPARTATE--TRNA LIGASE, MITOCHONDRIAL"/>
    <property type="match status" value="1"/>
</dbReference>
<dbReference type="PANTHER" id="PTHR22594">
    <property type="entry name" value="ASPARTYL/LYSYL-TRNA SYNTHETASE"/>
    <property type="match status" value="1"/>
</dbReference>
<dbReference type="Pfam" id="PF02938">
    <property type="entry name" value="GAD"/>
    <property type="match status" value="1"/>
</dbReference>
<dbReference type="Pfam" id="PF00152">
    <property type="entry name" value="tRNA-synt_2"/>
    <property type="match status" value="1"/>
</dbReference>
<dbReference type="Pfam" id="PF01336">
    <property type="entry name" value="tRNA_anti-codon"/>
    <property type="match status" value="1"/>
</dbReference>
<dbReference type="PRINTS" id="PR01042">
    <property type="entry name" value="TRNASYNTHASP"/>
</dbReference>
<dbReference type="SUPFAM" id="SSF55681">
    <property type="entry name" value="Class II aaRS and biotin synthetases"/>
    <property type="match status" value="1"/>
</dbReference>
<dbReference type="SUPFAM" id="SSF55261">
    <property type="entry name" value="GAD domain-like"/>
    <property type="match status" value="1"/>
</dbReference>
<dbReference type="SUPFAM" id="SSF50249">
    <property type="entry name" value="Nucleic acid-binding proteins"/>
    <property type="match status" value="1"/>
</dbReference>
<dbReference type="PROSITE" id="PS50862">
    <property type="entry name" value="AA_TRNA_LIGASE_II"/>
    <property type="match status" value="1"/>
</dbReference>
<accession>Q8Y270</accession>
<keyword id="KW-0030">Aminoacyl-tRNA synthetase</keyword>
<keyword id="KW-0067">ATP-binding</keyword>
<keyword id="KW-0963">Cytoplasm</keyword>
<keyword id="KW-0436">Ligase</keyword>
<keyword id="KW-0547">Nucleotide-binding</keyword>
<keyword id="KW-0648">Protein biosynthesis</keyword>
<keyword id="KW-1185">Reference proteome</keyword>
<name>SYDND_RALN1</name>